<organism>
    <name type="scientific">Bordetella bronchiseptica (strain ATCC BAA-588 / NCTC 13252 / RB50)</name>
    <name type="common">Alcaligenes bronchisepticus</name>
    <dbReference type="NCBI Taxonomy" id="257310"/>
    <lineage>
        <taxon>Bacteria</taxon>
        <taxon>Pseudomonadati</taxon>
        <taxon>Pseudomonadota</taxon>
        <taxon>Betaproteobacteria</taxon>
        <taxon>Burkholderiales</taxon>
        <taxon>Alcaligenaceae</taxon>
        <taxon>Bordetella</taxon>
    </lineage>
</organism>
<gene>
    <name evidence="1" type="primary">azoR</name>
    <name type="ordered locus">BB4225</name>
</gene>
<protein>
    <recommendedName>
        <fullName evidence="1">FMN-dependent NADH:quinone oxidoreductase</fullName>
        <ecNumber evidence="1">1.6.5.-</ecNumber>
    </recommendedName>
    <alternativeName>
        <fullName evidence="1">Azo-dye reductase</fullName>
    </alternativeName>
    <alternativeName>
        <fullName evidence="1">FMN-dependent NADH-azo compound oxidoreductase</fullName>
    </alternativeName>
    <alternativeName>
        <fullName evidence="1">FMN-dependent NADH-azoreductase</fullName>
        <ecNumber evidence="1">1.7.1.17</ecNumber>
    </alternativeName>
</protein>
<name>AZOR_BORBR</name>
<proteinExistence type="inferred from homology"/>
<accession>Q7WFP6</accession>
<keyword id="KW-0285">Flavoprotein</keyword>
<keyword id="KW-0288">FMN</keyword>
<keyword id="KW-0520">NAD</keyword>
<keyword id="KW-0560">Oxidoreductase</keyword>
<reference key="1">
    <citation type="journal article" date="2003" name="Nat. Genet.">
        <title>Comparative analysis of the genome sequences of Bordetella pertussis, Bordetella parapertussis and Bordetella bronchiseptica.</title>
        <authorList>
            <person name="Parkhill J."/>
            <person name="Sebaihia M."/>
            <person name="Preston A."/>
            <person name="Murphy L.D."/>
            <person name="Thomson N.R."/>
            <person name="Harris D.E."/>
            <person name="Holden M.T.G."/>
            <person name="Churcher C.M."/>
            <person name="Bentley S.D."/>
            <person name="Mungall K.L."/>
            <person name="Cerdeno-Tarraga A.-M."/>
            <person name="Temple L."/>
            <person name="James K.D."/>
            <person name="Harris B."/>
            <person name="Quail M.A."/>
            <person name="Achtman M."/>
            <person name="Atkin R."/>
            <person name="Baker S."/>
            <person name="Basham D."/>
            <person name="Bason N."/>
            <person name="Cherevach I."/>
            <person name="Chillingworth T."/>
            <person name="Collins M."/>
            <person name="Cronin A."/>
            <person name="Davis P."/>
            <person name="Doggett J."/>
            <person name="Feltwell T."/>
            <person name="Goble A."/>
            <person name="Hamlin N."/>
            <person name="Hauser H."/>
            <person name="Holroyd S."/>
            <person name="Jagels K."/>
            <person name="Leather S."/>
            <person name="Moule S."/>
            <person name="Norberczak H."/>
            <person name="O'Neil S."/>
            <person name="Ormond D."/>
            <person name="Price C."/>
            <person name="Rabbinowitsch E."/>
            <person name="Rutter S."/>
            <person name="Sanders M."/>
            <person name="Saunders D."/>
            <person name="Seeger K."/>
            <person name="Sharp S."/>
            <person name="Simmonds M."/>
            <person name="Skelton J."/>
            <person name="Squares R."/>
            <person name="Squares S."/>
            <person name="Stevens K."/>
            <person name="Unwin L."/>
            <person name="Whitehead S."/>
            <person name="Barrell B.G."/>
            <person name="Maskell D.J."/>
        </authorList>
    </citation>
    <scope>NUCLEOTIDE SEQUENCE [LARGE SCALE GENOMIC DNA]</scope>
    <source>
        <strain>ATCC BAA-588 / NCTC 13252 / RB50</strain>
    </source>
</reference>
<comment type="function">
    <text evidence="1">Quinone reductase that provides resistance to thiol-specific stress caused by electrophilic quinones.</text>
</comment>
<comment type="function">
    <text evidence="1">Also exhibits azoreductase activity. Catalyzes the reductive cleavage of the azo bond in aromatic azo compounds to the corresponding amines.</text>
</comment>
<comment type="catalytic activity">
    <reaction evidence="1">
        <text>2 a quinone + NADH + H(+) = 2 a 1,4-benzosemiquinone + NAD(+)</text>
        <dbReference type="Rhea" id="RHEA:65952"/>
        <dbReference type="ChEBI" id="CHEBI:15378"/>
        <dbReference type="ChEBI" id="CHEBI:57540"/>
        <dbReference type="ChEBI" id="CHEBI:57945"/>
        <dbReference type="ChEBI" id="CHEBI:132124"/>
        <dbReference type="ChEBI" id="CHEBI:134225"/>
    </reaction>
</comment>
<comment type="catalytic activity">
    <reaction evidence="1">
        <text>N,N-dimethyl-1,4-phenylenediamine + anthranilate + 2 NAD(+) = 2-(4-dimethylaminophenyl)diazenylbenzoate + 2 NADH + 2 H(+)</text>
        <dbReference type="Rhea" id="RHEA:55872"/>
        <dbReference type="ChEBI" id="CHEBI:15378"/>
        <dbReference type="ChEBI" id="CHEBI:15783"/>
        <dbReference type="ChEBI" id="CHEBI:16567"/>
        <dbReference type="ChEBI" id="CHEBI:57540"/>
        <dbReference type="ChEBI" id="CHEBI:57945"/>
        <dbReference type="ChEBI" id="CHEBI:71579"/>
        <dbReference type="EC" id="1.7.1.17"/>
    </reaction>
</comment>
<comment type="cofactor">
    <cofactor evidence="1">
        <name>FMN</name>
        <dbReference type="ChEBI" id="CHEBI:58210"/>
    </cofactor>
    <text evidence="1">Binds 1 FMN per subunit.</text>
</comment>
<comment type="subunit">
    <text evidence="1">Homodimer.</text>
</comment>
<comment type="similarity">
    <text evidence="1">Belongs to the azoreductase type 1 family.</text>
</comment>
<dbReference type="EC" id="1.6.5.-" evidence="1"/>
<dbReference type="EC" id="1.7.1.17" evidence="1"/>
<dbReference type="EMBL" id="BX640449">
    <property type="protein sequence ID" value="CAE34589.1"/>
    <property type="molecule type" value="Genomic_DNA"/>
</dbReference>
<dbReference type="RefSeq" id="WP_003814622.1">
    <property type="nucleotide sequence ID" value="NC_002927.3"/>
</dbReference>
<dbReference type="SMR" id="Q7WFP6"/>
<dbReference type="KEGG" id="bbr:BB4225"/>
<dbReference type="eggNOG" id="COG1182">
    <property type="taxonomic scope" value="Bacteria"/>
</dbReference>
<dbReference type="HOGENOM" id="CLU_088964_0_0_4"/>
<dbReference type="Proteomes" id="UP000001027">
    <property type="component" value="Chromosome"/>
</dbReference>
<dbReference type="GO" id="GO:0009055">
    <property type="term" value="F:electron transfer activity"/>
    <property type="evidence" value="ECO:0007669"/>
    <property type="project" value="UniProtKB-UniRule"/>
</dbReference>
<dbReference type="GO" id="GO:0010181">
    <property type="term" value="F:FMN binding"/>
    <property type="evidence" value="ECO:0007669"/>
    <property type="project" value="UniProtKB-UniRule"/>
</dbReference>
<dbReference type="GO" id="GO:0016652">
    <property type="term" value="F:oxidoreductase activity, acting on NAD(P)H as acceptor"/>
    <property type="evidence" value="ECO:0007669"/>
    <property type="project" value="UniProtKB-UniRule"/>
</dbReference>
<dbReference type="GO" id="GO:0016655">
    <property type="term" value="F:oxidoreductase activity, acting on NAD(P)H, quinone or similar compound as acceptor"/>
    <property type="evidence" value="ECO:0007669"/>
    <property type="project" value="InterPro"/>
</dbReference>
<dbReference type="Gene3D" id="3.40.50.360">
    <property type="match status" value="1"/>
</dbReference>
<dbReference type="HAMAP" id="MF_01216">
    <property type="entry name" value="Azoreductase_type1"/>
    <property type="match status" value="1"/>
</dbReference>
<dbReference type="InterPro" id="IPR003680">
    <property type="entry name" value="Flavodoxin_fold"/>
</dbReference>
<dbReference type="InterPro" id="IPR029039">
    <property type="entry name" value="Flavoprotein-like_sf"/>
</dbReference>
<dbReference type="InterPro" id="IPR050104">
    <property type="entry name" value="FMN-dep_NADH:Q_OxRdtase_AzoR1"/>
</dbReference>
<dbReference type="InterPro" id="IPR023048">
    <property type="entry name" value="NADH:quinone_OxRdtase_FMN_depd"/>
</dbReference>
<dbReference type="PANTHER" id="PTHR43741">
    <property type="entry name" value="FMN-DEPENDENT NADH-AZOREDUCTASE 1"/>
    <property type="match status" value="1"/>
</dbReference>
<dbReference type="PANTHER" id="PTHR43741:SF2">
    <property type="entry name" value="FMN-DEPENDENT NADH:QUINONE OXIDOREDUCTASE"/>
    <property type="match status" value="1"/>
</dbReference>
<dbReference type="Pfam" id="PF02525">
    <property type="entry name" value="Flavodoxin_2"/>
    <property type="match status" value="1"/>
</dbReference>
<dbReference type="SUPFAM" id="SSF52218">
    <property type="entry name" value="Flavoproteins"/>
    <property type="match status" value="1"/>
</dbReference>
<feature type="chain" id="PRO_0000245895" description="FMN-dependent NADH:quinone oxidoreductase">
    <location>
        <begin position="1"/>
        <end position="209"/>
    </location>
</feature>
<feature type="binding site" evidence="1">
    <location>
        <position position="9"/>
    </location>
    <ligand>
        <name>FMN</name>
        <dbReference type="ChEBI" id="CHEBI:58210"/>
    </ligand>
</feature>
<feature type="binding site" evidence="1">
    <location>
        <begin position="15"/>
        <end position="17"/>
    </location>
    <ligand>
        <name>FMN</name>
        <dbReference type="ChEBI" id="CHEBI:58210"/>
    </ligand>
</feature>
<evidence type="ECO:0000255" key="1">
    <source>
        <dbReference type="HAMAP-Rule" id="MF_01216"/>
    </source>
</evidence>
<sequence length="209" mass="22394">MKTLVILSSILGDRSNSKQLADHLLARLKQSEPGGTVKIRDLAADPVPYFDGATVGALFTPAEARNAQQQRIAALSDDLVAELFDADRIVFAVPVYNFNLPAQFKSYIDHIARAGVTFRYTAEGKPEGLVQGKQVLVLIARGGKSEGTPDDTMTPYLKQMLAFLGMTDVTFIAAEGMAMGELAAQEGLALARQRIDALSLDARQGLAAA</sequence>